<organism>
    <name type="scientific">Escherichia coli (strain K12 / MC4100 / BW2952)</name>
    <dbReference type="NCBI Taxonomy" id="595496"/>
    <lineage>
        <taxon>Bacteria</taxon>
        <taxon>Pseudomonadati</taxon>
        <taxon>Pseudomonadota</taxon>
        <taxon>Gammaproteobacteria</taxon>
        <taxon>Enterobacterales</taxon>
        <taxon>Enterobacteriaceae</taxon>
        <taxon>Escherichia</taxon>
    </lineage>
</organism>
<evidence type="ECO:0000255" key="1">
    <source>
        <dbReference type="HAMAP-Rule" id="MF_01845"/>
    </source>
</evidence>
<feature type="chain" id="PRO_1000216106" description="UPF0597 protein YhaM">
    <location>
        <begin position="1"/>
        <end position="436"/>
    </location>
</feature>
<accession>C4ZR24</accession>
<gene>
    <name evidence="1" type="primary">yhaM</name>
    <name type="ordered locus">BWG_2818</name>
</gene>
<dbReference type="EMBL" id="CP001396">
    <property type="protein sequence ID" value="ACR62419.1"/>
    <property type="molecule type" value="Genomic_DNA"/>
</dbReference>
<dbReference type="SMR" id="C4ZR24"/>
<dbReference type="KEGG" id="ebw:BWG_2818"/>
<dbReference type="HOGENOM" id="CLU_051840_0_0_6"/>
<dbReference type="GO" id="GO:0080146">
    <property type="term" value="F:L-cysteine desulfhydrase activity"/>
    <property type="evidence" value="ECO:0007669"/>
    <property type="project" value="TreeGrafter"/>
</dbReference>
<dbReference type="GO" id="GO:0019450">
    <property type="term" value="P:L-cysteine catabolic process to pyruvate"/>
    <property type="evidence" value="ECO:0007669"/>
    <property type="project" value="TreeGrafter"/>
</dbReference>
<dbReference type="HAMAP" id="MF_01845">
    <property type="entry name" value="UPF0597"/>
    <property type="match status" value="1"/>
</dbReference>
<dbReference type="InterPro" id="IPR005130">
    <property type="entry name" value="Ser_deHydtase-like_asu"/>
</dbReference>
<dbReference type="InterPro" id="IPR021144">
    <property type="entry name" value="UPF0597"/>
</dbReference>
<dbReference type="PANTHER" id="PTHR30501">
    <property type="entry name" value="UPF0597 PROTEIN YHAM"/>
    <property type="match status" value="1"/>
</dbReference>
<dbReference type="PANTHER" id="PTHR30501:SF2">
    <property type="entry name" value="UPF0597 PROTEIN YHAM"/>
    <property type="match status" value="1"/>
</dbReference>
<dbReference type="Pfam" id="PF03313">
    <property type="entry name" value="SDH_alpha"/>
    <property type="match status" value="1"/>
</dbReference>
<dbReference type="PIRSF" id="PIRSF006054">
    <property type="entry name" value="UCP006054"/>
    <property type="match status" value="1"/>
</dbReference>
<reference key="1">
    <citation type="journal article" date="2009" name="J. Bacteriol.">
        <title>Genomic sequencing reveals regulatory mutations and recombinational events in the widely used MC4100 lineage of Escherichia coli K-12.</title>
        <authorList>
            <person name="Ferenci T."/>
            <person name="Zhou Z."/>
            <person name="Betteridge T."/>
            <person name="Ren Y."/>
            <person name="Liu Y."/>
            <person name="Feng L."/>
            <person name="Reeves P.R."/>
            <person name="Wang L."/>
        </authorList>
    </citation>
    <scope>NUCLEOTIDE SEQUENCE [LARGE SCALE GENOMIC DNA]</scope>
    <source>
        <strain>K12 / MC4100 / BW2952</strain>
    </source>
</reference>
<sequence length="436" mass="45361">MFDSTLNPLWQRYILAVQEEVKPALGCTEPISLALAAAVAAAELEGPVERVEAWVSPNLMKNGLGVTVPGTGMVGLPIAAALGALGGNANAGLEVLKDATAQAIADAKALLAAGKVSVKIQEPCDEILFSRAKVWNGEKWACVTIVGGHTNIVHIETHDGVVFTQQACVAEGEQESPLTVLSRTTLAEILKFVNEVPFAAIRFILDSAKLNCALSQEGLSGKWGLHIGATLEKQCERGLLAKDLSSSIVIRTSAASDARMGGATLPAMSNSGSGNQGITATMPVVVVAEHFGADDERLARALMLSHLSAIYIHNQLPRLSALCAATTAAMGAAAGMAWLVDGRYETISMAISSMIGDVSGMICDGASNSCAMKVSTSASAAWKAVLMALDDTAVTGNEGIVAHDVEQSIANLCALASHSMQQTDRQIIEIMASKAR</sequence>
<comment type="similarity">
    <text evidence="1">Belongs to the UPF0597 family.</text>
</comment>
<name>YHAM_ECOBW</name>
<protein>
    <recommendedName>
        <fullName evidence="1">UPF0597 protein YhaM</fullName>
    </recommendedName>
</protein>
<proteinExistence type="inferred from homology"/>